<comment type="function">
    <text evidence="1">Catalyzes the conversion of D-ribulose 5-phosphate to formate and 3,4-dihydroxy-2-butanone 4-phosphate.</text>
</comment>
<comment type="function">
    <text evidence="1">Catalyzes the conversion of GTP to 2,5-diamino-6-ribosylamino-4(3H)-pyrimidinone 5'-phosphate (DARP), formate and pyrophosphate.</text>
</comment>
<comment type="catalytic activity">
    <reaction evidence="1">
        <text>D-ribulose 5-phosphate = (2S)-2-hydroxy-3-oxobutyl phosphate + formate + H(+)</text>
        <dbReference type="Rhea" id="RHEA:18457"/>
        <dbReference type="ChEBI" id="CHEBI:15378"/>
        <dbReference type="ChEBI" id="CHEBI:15740"/>
        <dbReference type="ChEBI" id="CHEBI:58121"/>
        <dbReference type="ChEBI" id="CHEBI:58830"/>
        <dbReference type="EC" id="4.1.99.12"/>
    </reaction>
</comment>
<comment type="catalytic activity">
    <reaction evidence="1">
        <text>GTP + 4 H2O = 2,5-diamino-6-hydroxy-4-(5-phosphoribosylamino)-pyrimidine + formate + 2 phosphate + 3 H(+)</text>
        <dbReference type="Rhea" id="RHEA:23704"/>
        <dbReference type="ChEBI" id="CHEBI:15377"/>
        <dbReference type="ChEBI" id="CHEBI:15378"/>
        <dbReference type="ChEBI" id="CHEBI:15740"/>
        <dbReference type="ChEBI" id="CHEBI:37565"/>
        <dbReference type="ChEBI" id="CHEBI:43474"/>
        <dbReference type="ChEBI" id="CHEBI:58614"/>
        <dbReference type="EC" id="3.5.4.25"/>
    </reaction>
</comment>
<comment type="cofactor">
    <cofactor evidence="1">
        <name>Mg(2+)</name>
        <dbReference type="ChEBI" id="CHEBI:18420"/>
    </cofactor>
    <cofactor evidence="1">
        <name>Mn(2+)</name>
        <dbReference type="ChEBI" id="CHEBI:29035"/>
    </cofactor>
    <text evidence="1">Binds 2 divalent metal cations per subunit. Magnesium or manganese.</text>
</comment>
<comment type="cofactor">
    <cofactor evidence="1">
        <name>Zn(2+)</name>
        <dbReference type="ChEBI" id="CHEBI:29105"/>
    </cofactor>
    <text evidence="1">Binds 1 zinc ion per subunit.</text>
</comment>
<comment type="pathway">
    <text evidence="1">Cofactor biosynthesis; riboflavin biosynthesis; 2-hydroxy-3-oxobutyl phosphate from D-ribulose 5-phosphate: step 1/1.</text>
</comment>
<comment type="pathway">
    <text evidence="1">Cofactor biosynthesis; riboflavin biosynthesis; 5-amino-6-(D-ribitylamino)uracil from GTP: step 1/4.</text>
</comment>
<comment type="similarity">
    <text evidence="1">In the N-terminal section; belongs to the DHBP synthase family.</text>
</comment>
<comment type="similarity">
    <text evidence="1">In the C-terminal section; belongs to the GTP cyclohydrolase II family.</text>
</comment>
<keyword id="KW-0342">GTP-binding</keyword>
<keyword id="KW-0378">Hydrolase</keyword>
<keyword id="KW-0456">Lyase</keyword>
<keyword id="KW-0460">Magnesium</keyword>
<keyword id="KW-0464">Manganese</keyword>
<keyword id="KW-0479">Metal-binding</keyword>
<keyword id="KW-0511">Multifunctional enzyme</keyword>
<keyword id="KW-0547">Nucleotide-binding</keyword>
<keyword id="KW-1185">Reference proteome</keyword>
<keyword id="KW-0686">Riboflavin biosynthesis</keyword>
<keyword id="KW-0862">Zinc</keyword>
<name>RIBBA_BACCR</name>
<proteinExistence type="inferred from homology"/>
<dbReference type="EC" id="4.1.99.12" evidence="1"/>
<dbReference type="EC" id="3.5.4.25" evidence="1"/>
<dbReference type="EMBL" id="AE016877">
    <property type="protein sequence ID" value="AAP11030.1"/>
    <property type="molecule type" value="Genomic_DNA"/>
</dbReference>
<dbReference type="RefSeq" id="NP_833829.1">
    <property type="nucleotide sequence ID" value="NC_004722.1"/>
</dbReference>
<dbReference type="RefSeq" id="WP_000468974.1">
    <property type="nucleotide sequence ID" value="NC_004722.1"/>
</dbReference>
<dbReference type="SMR" id="Q818X6"/>
<dbReference type="STRING" id="226900.BC_4111"/>
<dbReference type="MetOSite" id="Q818X6"/>
<dbReference type="KEGG" id="bce:BC4111"/>
<dbReference type="PATRIC" id="fig|226900.8.peg.4247"/>
<dbReference type="HOGENOM" id="CLU_020273_1_2_9"/>
<dbReference type="OrthoDB" id="9793111at2"/>
<dbReference type="UniPathway" id="UPA00275">
    <property type="reaction ID" value="UER00399"/>
</dbReference>
<dbReference type="UniPathway" id="UPA00275">
    <property type="reaction ID" value="UER00400"/>
</dbReference>
<dbReference type="Proteomes" id="UP000001417">
    <property type="component" value="Chromosome"/>
</dbReference>
<dbReference type="GO" id="GO:0005829">
    <property type="term" value="C:cytosol"/>
    <property type="evidence" value="ECO:0000318"/>
    <property type="project" value="GO_Central"/>
</dbReference>
<dbReference type="GO" id="GO:0008686">
    <property type="term" value="F:3,4-dihydroxy-2-butanone-4-phosphate synthase activity"/>
    <property type="evidence" value="ECO:0007669"/>
    <property type="project" value="UniProtKB-UniRule"/>
</dbReference>
<dbReference type="GO" id="GO:0005525">
    <property type="term" value="F:GTP binding"/>
    <property type="evidence" value="ECO:0007669"/>
    <property type="project" value="UniProtKB-KW"/>
</dbReference>
<dbReference type="GO" id="GO:0003935">
    <property type="term" value="F:GTP cyclohydrolase II activity"/>
    <property type="evidence" value="ECO:0000318"/>
    <property type="project" value="GO_Central"/>
</dbReference>
<dbReference type="GO" id="GO:0000287">
    <property type="term" value="F:magnesium ion binding"/>
    <property type="evidence" value="ECO:0007669"/>
    <property type="project" value="UniProtKB-UniRule"/>
</dbReference>
<dbReference type="GO" id="GO:0030145">
    <property type="term" value="F:manganese ion binding"/>
    <property type="evidence" value="ECO:0007669"/>
    <property type="project" value="UniProtKB-UniRule"/>
</dbReference>
<dbReference type="GO" id="GO:0008270">
    <property type="term" value="F:zinc ion binding"/>
    <property type="evidence" value="ECO:0007669"/>
    <property type="project" value="UniProtKB-UniRule"/>
</dbReference>
<dbReference type="GO" id="GO:0009231">
    <property type="term" value="P:riboflavin biosynthetic process"/>
    <property type="evidence" value="ECO:0000318"/>
    <property type="project" value="GO_Central"/>
</dbReference>
<dbReference type="CDD" id="cd00641">
    <property type="entry name" value="GTP_cyclohydro2"/>
    <property type="match status" value="1"/>
</dbReference>
<dbReference type="FunFam" id="3.40.50.10990:FF:000001">
    <property type="entry name" value="Riboflavin biosynthesis protein RibBA"/>
    <property type="match status" value="1"/>
</dbReference>
<dbReference type="FunFam" id="3.90.870.10:FF:000001">
    <property type="entry name" value="Riboflavin biosynthesis protein RibBA"/>
    <property type="match status" value="1"/>
</dbReference>
<dbReference type="Gene3D" id="3.90.870.10">
    <property type="entry name" value="DHBP synthase"/>
    <property type="match status" value="1"/>
</dbReference>
<dbReference type="Gene3D" id="3.40.50.10990">
    <property type="entry name" value="GTP cyclohydrolase II"/>
    <property type="match status" value="1"/>
</dbReference>
<dbReference type="HAMAP" id="MF_00179">
    <property type="entry name" value="RibA"/>
    <property type="match status" value="1"/>
</dbReference>
<dbReference type="HAMAP" id="MF_00180">
    <property type="entry name" value="RibB"/>
    <property type="match status" value="1"/>
</dbReference>
<dbReference type="HAMAP" id="MF_01283">
    <property type="entry name" value="RibBA"/>
    <property type="match status" value="1"/>
</dbReference>
<dbReference type="InterPro" id="IPR017945">
    <property type="entry name" value="DHBP_synth_RibB-like_a/b_dom"/>
</dbReference>
<dbReference type="InterPro" id="IPR000422">
    <property type="entry name" value="DHBP_synthase_RibB"/>
</dbReference>
<dbReference type="InterPro" id="IPR032677">
    <property type="entry name" value="GTP_cyclohydro_II"/>
</dbReference>
<dbReference type="InterPro" id="IPR000926">
    <property type="entry name" value="RibA"/>
</dbReference>
<dbReference type="InterPro" id="IPR036144">
    <property type="entry name" value="RibA-like_sf"/>
</dbReference>
<dbReference type="InterPro" id="IPR016299">
    <property type="entry name" value="Riboflavin_synth_RibBA"/>
</dbReference>
<dbReference type="NCBIfam" id="NF001591">
    <property type="entry name" value="PRK00393.1"/>
    <property type="match status" value="1"/>
</dbReference>
<dbReference type="NCBIfam" id="NF006803">
    <property type="entry name" value="PRK09311.1"/>
    <property type="match status" value="1"/>
</dbReference>
<dbReference type="NCBIfam" id="TIGR00505">
    <property type="entry name" value="ribA"/>
    <property type="match status" value="1"/>
</dbReference>
<dbReference type="NCBIfam" id="TIGR00506">
    <property type="entry name" value="ribB"/>
    <property type="match status" value="1"/>
</dbReference>
<dbReference type="PANTHER" id="PTHR21327:SF18">
    <property type="entry name" value="3,4-DIHYDROXY-2-BUTANONE 4-PHOSPHATE SYNTHASE"/>
    <property type="match status" value="1"/>
</dbReference>
<dbReference type="PANTHER" id="PTHR21327">
    <property type="entry name" value="GTP CYCLOHYDROLASE II-RELATED"/>
    <property type="match status" value="1"/>
</dbReference>
<dbReference type="Pfam" id="PF00926">
    <property type="entry name" value="DHBP_synthase"/>
    <property type="match status" value="1"/>
</dbReference>
<dbReference type="Pfam" id="PF00925">
    <property type="entry name" value="GTP_cyclohydro2"/>
    <property type="match status" value="1"/>
</dbReference>
<dbReference type="PIRSF" id="PIRSF001259">
    <property type="entry name" value="RibA"/>
    <property type="match status" value="1"/>
</dbReference>
<dbReference type="SUPFAM" id="SSF142695">
    <property type="entry name" value="RibA-like"/>
    <property type="match status" value="1"/>
</dbReference>
<dbReference type="SUPFAM" id="SSF55821">
    <property type="entry name" value="YrdC/RibB"/>
    <property type="match status" value="1"/>
</dbReference>
<organism>
    <name type="scientific">Bacillus cereus (strain ATCC 14579 / DSM 31 / CCUG 7414 / JCM 2152 / NBRC 15305 / NCIMB 9373 / NCTC 2599 / NRRL B-3711)</name>
    <dbReference type="NCBI Taxonomy" id="226900"/>
    <lineage>
        <taxon>Bacteria</taxon>
        <taxon>Bacillati</taxon>
        <taxon>Bacillota</taxon>
        <taxon>Bacilli</taxon>
        <taxon>Bacillales</taxon>
        <taxon>Bacillaceae</taxon>
        <taxon>Bacillus</taxon>
        <taxon>Bacillus cereus group</taxon>
    </lineage>
</organism>
<gene>
    <name evidence="1" type="primary">ribBA</name>
    <name type="ordered locus">BC_4111</name>
</gene>
<sequence length="397" mass="43886">MFHRIEEALEDLKKGKVVIVCDDENRENEGDFIALAEYITPETINFMITHGRGLVCVPITEGYAERLQLEPMVSHNTDSHHTAFTVSIDHVSTTTGISAHERATTIQELLNPASKGADFNRPGHIFPLIAKEGGVLRRAGHTEAAVDLAKLCGAEPAGVICEIINEDGTMARVPDLIECAKQFDIKMITIEDLIAYRRHHETLVTREAEITLPTDFGTFHAIGYSNSLDTKEHIALVKGDISTGEPVLVRVHSECLTGDVFGSHRCDCGPQLHAALAQIEREGKGVLLYMRQEGRGIGLLNKLRAYKLQEEGFDTVEANEKLGFPADLRDYGIGAQILKDLGLQSLRLLTNNPRKIAGLQGYDLEVVERVPLQMPAKEENKSYLQTKVNKLGHLLNL</sequence>
<feature type="chain" id="PRO_1000067417" description="Riboflavin biosynthesis protein RibBA">
    <location>
        <begin position="1"/>
        <end position="397"/>
    </location>
</feature>
<feature type="region of interest" description="DHBP synthase">
    <location>
        <begin position="1"/>
        <end position="199"/>
    </location>
</feature>
<feature type="region of interest" description="GTP cyclohydrolase II">
    <location>
        <begin position="200"/>
        <end position="397"/>
    </location>
</feature>
<feature type="active site" description="Proton acceptor; for GTP cyclohydrolase activity" evidence="1">
    <location>
        <position position="327"/>
    </location>
</feature>
<feature type="active site" description="Nucleophile; for GTP cyclohydrolase activity" evidence="1">
    <location>
        <position position="329"/>
    </location>
</feature>
<feature type="binding site" evidence="1">
    <location>
        <begin position="26"/>
        <end position="27"/>
    </location>
    <ligand>
        <name>D-ribulose 5-phosphate</name>
        <dbReference type="ChEBI" id="CHEBI:58121"/>
    </ligand>
</feature>
<feature type="binding site" evidence="1">
    <location>
        <position position="27"/>
    </location>
    <ligand>
        <name>Mg(2+)</name>
        <dbReference type="ChEBI" id="CHEBI:18420"/>
        <label>1</label>
    </ligand>
</feature>
<feature type="binding site" evidence="1">
    <location>
        <position position="27"/>
    </location>
    <ligand>
        <name>Mg(2+)</name>
        <dbReference type="ChEBI" id="CHEBI:18420"/>
        <label>2</label>
    </ligand>
</feature>
<feature type="binding site" evidence="1">
    <location>
        <position position="31"/>
    </location>
    <ligand>
        <name>D-ribulose 5-phosphate</name>
        <dbReference type="ChEBI" id="CHEBI:58121"/>
    </ligand>
</feature>
<feature type="binding site" evidence="1">
    <location>
        <begin position="138"/>
        <end position="142"/>
    </location>
    <ligand>
        <name>D-ribulose 5-phosphate</name>
        <dbReference type="ChEBI" id="CHEBI:58121"/>
    </ligand>
</feature>
<feature type="binding site" evidence="1">
    <location>
        <position position="141"/>
    </location>
    <ligand>
        <name>Mg(2+)</name>
        <dbReference type="ChEBI" id="CHEBI:18420"/>
        <label>2</label>
    </ligand>
</feature>
<feature type="binding site" evidence="1">
    <location>
        <position position="162"/>
    </location>
    <ligand>
        <name>D-ribulose 5-phosphate</name>
        <dbReference type="ChEBI" id="CHEBI:58121"/>
    </ligand>
</feature>
<feature type="binding site" evidence="1">
    <location>
        <begin position="250"/>
        <end position="254"/>
    </location>
    <ligand>
        <name>GTP</name>
        <dbReference type="ChEBI" id="CHEBI:37565"/>
    </ligand>
</feature>
<feature type="binding site" evidence="1">
    <location>
        <position position="255"/>
    </location>
    <ligand>
        <name>Zn(2+)</name>
        <dbReference type="ChEBI" id="CHEBI:29105"/>
        <note>catalytic</note>
    </ligand>
</feature>
<feature type="binding site" evidence="1">
    <location>
        <position position="266"/>
    </location>
    <ligand>
        <name>Zn(2+)</name>
        <dbReference type="ChEBI" id="CHEBI:29105"/>
        <note>catalytic</note>
    </ligand>
</feature>
<feature type="binding site" evidence="1">
    <location>
        <position position="268"/>
    </location>
    <ligand>
        <name>Zn(2+)</name>
        <dbReference type="ChEBI" id="CHEBI:29105"/>
        <note>catalytic</note>
    </ligand>
</feature>
<feature type="binding site" evidence="1">
    <location>
        <position position="271"/>
    </location>
    <ligand>
        <name>GTP</name>
        <dbReference type="ChEBI" id="CHEBI:37565"/>
    </ligand>
</feature>
<feature type="binding site" evidence="1">
    <location>
        <begin position="293"/>
        <end position="295"/>
    </location>
    <ligand>
        <name>GTP</name>
        <dbReference type="ChEBI" id="CHEBI:37565"/>
    </ligand>
</feature>
<feature type="binding site" evidence="1">
    <location>
        <position position="315"/>
    </location>
    <ligand>
        <name>GTP</name>
        <dbReference type="ChEBI" id="CHEBI:37565"/>
    </ligand>
</feature>
<feature type="binding site" evidence="1">
    <location>
        <position position="350"/>
    </location>
    <ligand>
        <name>GTP</name>
        <dbReference type="ChEBI" id="CHEBI:37565"/>
    </ligand>
</feature>
<feature type="binding site" evidence="1">
    <location>
        <position position="355"/>
    </location>
    <ligand>
        <name>GTP</name>
        <dbReference type="ChEBI" id="CHEBI:37565"/>
    </ligand>
</feature>
<feature type="site" description="Essential for DHBP synthase activity" evidence="1">
    <location>
        <position position="124"/>
    </location>
</feature>
<feature type="site" description="Essential for DHBP synthase activity" evidence="1">
    <location>
        <position position="162"/>
    </location>
</feature>
<evidence type="ECO:0000255" key="1">
    <source>
        <dbReference type="HAMAP-Rule" id="MF_01283"/>
    </source>
</evidence>
<protein>
    <recommendedName>
        <fullName evidence="1">Riboflavin biosynthesis protein RibBA</fullName>
    </recommendedName>
    <domain>
        <recommendedName>
            <fullName evidence="1">3,4-dihydroxy-2-butanone 4-phosphate synthase</fullName>
            <shortName evidence="1">DHBP synthase</shortName>
            <ecNumber evidence="1">4.1.99.12</ecNumber>
        </recommendedName>
    </domain>
    <domain>
        <recommendedName>
            <fullName evidence="1">GTP cyclohydrolase-2</fullName>
            <ecNumber evidence="1">3.5.4.25</ecNumber>
        </recommendedName>
        <alternativeName>
            <fullName evidence="1">GTP cyclohydrolase II</fullName>
        </alternativeName>
    </domain>
</protein>
<reference key="1">
    <citation type="journal article" date="2003" name="Nature">
        <title>Genome sequence of Bacillus cereus and comparative analysis with Bacillus anthracis.</title>
        <authorList>
            <person name="Ivanova N."/>
            <person name="Sorokin A."/>
            <person name="Anderson I."/>
            <person name="Galleron N."/>
            <person name="Candelon B."/>
            <person name="Kapatral V."/>
            <person name="Bhattacharyya A."/>
            <person name="Reznik G."/>
            <person name="Mikhailova N."/>
            <person name="Lapidus A."/>
            <person name="Chu L."/>
            <person name="Mazur M."/>
            <person name="Goltsman E."/>
            <person name="Larsen N."/>
            <person name="D'Souza M."/>
            <person name="Walunas T."/>
            <person name="Grechkin Y."/>
            <person name="Pusch G."/>
            <person name="Haselkorn R."/>
            <person name="Fonstein M."/>
            <person name="Ehrlich S.D."/>
            <person name="Overbeek R."/>
            <person name="Kyrpides N.C."/>
        </authorList>
    </citation>
    <scope>NUCLEOTIDE SEQUENCE [LARGE SCALE GENOMIC DNA]</scope>
    <source>
        <strain>ATCC 14579 / DSM 31 / CCUG 7414 / JCM 2152 / NBRC 15305 / NCIMB 9373 / NCTC 2599 / NRRL B-3711</strain>
    </source>
</reference>
<accession>Q818X6</accession>